<gene>
    <name evidence="1" type="primary">msrB</name>
    <name type="ordered locus">Bcep1808_1841</name>
</gene>
<reference key="1">
    <citation type="submission" date="2007-03" db="EMBL/GenBank/DDBJ databases">
        <title>Complete sequence of chromosome 1 of Burkholderia vietnamiensis G4.</title>
        <authorList>
            <consortium name="US DOE Joint Genome Institute"/>
            <person name="Copeland A."/>
            <person name="Lucas S."/>
            <person name="Lapidus A."/>
            <person name="Barry K."/>
            <person name="Detter J.C."/>
            <person name="Glavina del Rio T."/>
            <person name="Hammon N."/>
            <person name="Israni S."/>
            <person name="Dalin E."/>
            <person name="Tice H."/>
            <person name="Pitluck S."/>
            <person name="Chain P."/>
            <person name="Malfatti S."/>
            <person name="Shin M."/>
            <person name="Vergez L."/>
            <person name="Schmutz J."/>
            <person name="Larimer F."/>
            <person name="Land M."/>
            <person name="Hauser L."/>
            <person name="Kyrpides N."/>
            <person name="Tiedje J."/>
            <person name="Richardson P."/>
        </authorList>
    </citation>
    <scope>NUCLEOTIDE SEQUENCE [LARGE SCALE GENOMIC DNA]</scope>
    <source>
        <strain>G4 / LMG 22486</strain>
    </source>
</reference>
<name>MSRB_BURVG</name>
<organism>
    <name type="scientific">Burkholderia vietnamiensis (strain G4 / LMG 22486)</name>
    <name type="common">Burkholderia cepacia (strain R1808)</name>
    <dbReference type="NCBI Taxonomy" id="269482"/>
    <lineage>
        <taxon>Bacteria</taxon>
        <taxon>Pseudomonadati</taxon>
        <taxon>Pseudomonadota</taxon>
        <taxon>Betaproteobacteria</taxon>
        <taxon>Burkholderiales</taxon>
        <taxon>Burkholderiaceae</taxon>
        <taxon>Burkholderia</taxon>
        <taxon>Burkholderia cepacia complex</taxon>
    </lineage>
</organism>
<accession>A4JEZ1</accession>
<feature type="chain" id="PRO_1000145363" description="Peptide methionine sulfoxide reductase MsrB">
    <location>
        <begin position="1"/>
        <end position="143"/>
    </location>
</feature>
<feature type="domain" description="MsrB" evidence="2">
    <location>
        <begin position="16"/>
        <end position="139"/>
    </location>
</feature>
<feature type="active site" description="Nucleophile" evidence="2">
    <location>
        <position position="128"/>
    </location>
</feature>
<feature type="binding site" evidence="2">
    <location>
        <position position="55"/>
    </location>
    <ligand>
        <name>Zn(2+)</name>
        <dbReference type="ChEBI" id="CHEBI:29105"/>
    </ligand>
</feature>
<feature type="binding site" evidence="2">
    <location>
        <position position="58"/>
    </location>
    <ligand>
        <name>Zn(2+)</name>
        <dbReference type="ChEBI" id="CHEBI:29105"/>
    </ligand>
</feature>
<feature type="binding site" evidence="2">
    <location>
        <position position="104"/>
    </location>
    <ligand>
        <name>Zn(2+)</name>
        <dbReference type="ChEBI" id="CHEBI:29105"/>
    </ligand>
</feature>
<feature type="binding site" evidence="2">
    <location>
        <position position="107"/>
    </location>
    <ligand>
        <name>Zn(2+)</name>
        <dbReference type="ChEBI" id="CHEBI:29105"/>
    </ligand>
</feature>
<sequence length="143" mass="16239">MSHDSDDKTYPYQKDDAELRRRLTPMQYEVTQHAATERAFTGEYTDTEDAGIYKCVVCSTPLFESGAKFHSGCGWPSYFKPLNGEVIDEKIDRSHGMVRVEVRCNHCGAHLGHVFEDGPRDQTGLRYCINSAALNFESRPENE</sequence>
<keyword id="KW-0479">Metal-binding</keyword>
<keyword id="KW-0560">Oxidoreductase</keyword>
<keyword id="KW-0862">Zinc</keyword>
<dbReference type="EC" id="1.8.4.12" evidence="1"/>
<dbReference type="EMBL" id="CP000614">
    <property type="protein sequence ID" value="ABO54844.1"/>
    <property type="molecule type" value="Genomic_DNA"/>
</dbReference>
<dbReference type="SMR" id="A4JEZ1"/>
<dbReference type="KEGG" id="bvi:Bcep1808_1841"/>
<dbReference type="eggNOG" id="COG0229">
    <property type="taxonomic scope" value="Bacteria"/>
</dbReference>
<dbReference type="HOGENOM" id="CLU_031040_8_5_4"/>
<dbReference type="Proteomes" id="UP000002287">
    <property type="component" value="Chromosome 1"/>
</dbReference>
<dbReference type="GO" id="GO:0005737">
    <property type="term" value="C:cytoplasm"/>
    <property type="evidence" value="ECO:0007669"/>
    <property type="project" value="TreeGrafter"/>
</dbReference>
<dbReference type="GO" id="GO:0033743">
    <property type="term" value="F:peptide-methionine (R)-S-oxide reductase activity"/>
    <property type="evidence" value="ECO:0007669"/>
    <property type="project" value="UniProtKB-UniRule"/>
</dbReference>
<dbReference type="GO" id="GO:0008270">
    <property type="term" value="F:zinc ion binding"/>
    <property type="evidence" value="ECO:0007669"/>
    <property type="project" value="UniProtKB-UniRule"/>
</dbReference>
<dbReference type="GO" id="GO:0030091">
    <property type="term" value="P:protein repair"/>
    <property type="evidence" value="ECO:0007669"/>
    <property type="project" value="InterPro"/>
</dbReference>
<dbReference type="GO" id="GO:0006979">
    <property type="term" value="P:response to oxidative stress"/>
    <property type="evidence" value="ECO:0007669"/>
    <property type="project" value="InterPro"/>
</dbReference>
<dbReference type="FunFam" id="2.170.150.20:FF:000003">
    <property type="entry name" value="Peptide methionine sulfoxide reductase MsrB"/>
    <property type="match status" value="1"/>
</dbReference>
<dbReference type="Gene3D" id="2.170.150.20">
    <property type="entry name" value="Peptide methionine sulfoxide reductase"/>
    <property type="match status" value="1"/>
</dbReference>
<dbReference type="HAMAP" id="MF_01400">
    <property type="entry name" value="MsrB"/>
    <property type="match status" value="1"/>
</dbReference>
<dbReference type="InterPro" id="IPR028427">
    <property type="entry name" value="Met_Sox_Rdtase_MsrB"/>
</dbReference>
<dbReference type="InterPro" id="IPR002579">
    <property type="entry name" value="Met_Sox_Rdtase_MsrB_dom"/>
</dbReference>
<dbReference type="InterPro" id="IPR011057">
    <property type="entry name" value="Mss4-like_sf"/>
</dbReference>
<dbReference type="NCBIfam" id="TIGR00357">
    <property type="entry name" value="peptide-methionine (R)-S-oxide reductase MsrB"/>
    <property type="match status" value="1"/>
</dbReference>
<dbReference type="PANTHER" id="PTHR10173">
    <property type="entry name" value="METHIONINE SULFOXIDE REDUCTASE"/>
    <property type="match status" value="1"/>
</dbReference>
<dbReference type="PANTHER" id="PTHR10173:SF52">
    <property type="entry name" value="METHIONINE-R-SULFOXIDE REDUCTASE B1"/>
    <property type="match status" value="1"/>
</dbReference>
<dbReference type="Pfam" id="PF01641">
    <property type="entry name" value="SelR"/>
    <property type="match status" value="1"/>
</dbReference>
<dbReference type="SUPFAM" id="SSF51316">
    <property type="entry name" value="Mss4-like"/>
    <property type="match status" value="1"/>
</dbReference>
<dbReference type="PROSITE" id="PS51790">
    <property type="entry name" value="MSRB"/>
    <property type="match status" value="1"/>
</dbReference>
<comment type="catalytic activity">
    <reaction evidence="1">
        <text>L-methionyl-[protein] + [thioredoxin]-disulfide + H2O = L-methionyl-(R)-S-oxide-[protein] + [thioredoxin]-dithiol</text>
        <dbReference type="Rhea" id="RHEA:24164"/>
        <dbReference type="Rhea" id="RHEA-COMP:10698"/>
        <dbReference type="Rhea" id="RHEA-COMP:10700"/>
        <dbReference type="Rhea" id="RHEA-COMP:12313"/>
        <dbReference type="Rhea" id="RHEA-COMP:12314"/>
        <dbReference type="ChEBI" id="CHEBI:15377"/>
        <dbReference type="ChEBI" id="CHEBI:16044"/>
        <dbReference type="ChEBI" id="CHEBI:29950"/>
        <dbReference type="ChEBI" id="CHEBI:45764"/>
        <dbReference type="ChEBI" id="CHEBI:50058"/>
        <dbReference type="EC" id="1.8.4.12"/>
    </reaction>
</comment>
<comment type="cofactor">
    <cofactor evidence="1">
        <name>Zn(2+)</name>
        <dbReference type="ChEBI" id="CHEBI:29105"/>
    </cofactor>
    <text evidence="1">Binds 1 zinc ion per subunit. The zinc ion is important for the structural integrity of the protein.</text>
</comment>
<comment type="similarity">
    <text evidence="1">Belongs to the MsrB Met sulfoxide reductase family.</text>
</comment>
<proteinExistence type="inferred from homology"/>
<evidence type="ECO:0000255" key="1">
    <source>
        <dbReference type="HAMAP-Rule" id="MF_01400"/>
    </source>
</evidence>
<evidence type="ECO:0000255" key="2">
    <source>
        <dbReference type="PROSITE-ProRule" id="PRU01126"/>
    </source>
</evidence>
<protein>
    <recommendedName>
        <fullName evidence="1">Peptide methionine sulfoxide reductase MsrB</fullName>
        <ecNumber evidence="1">1.8.4.12</ecNumber>
    </recommendedName>
    <alternativeName>
        <fullName evidence="1">Peptide-methionine (R)-S-oxide reductase</fullName>
    </alternativeName>
</protein>